<name>HFB26_TRIAP</name>
<comment type="function">
    <text evidence="3 5">Aerial growth, conidiation, and dispersal of filamentous fungi in the environment rely upon a capability of their secreting small amphipathic proteins called hydrophobins (HPBs) with low sequence identity. Class I can self-assemble into an outermost layer of rodlet bundles on aerial cell surfaces, conferring cellular hydrophobicity that supports fungal growth, development and dispersal; whereas Class II form highly ordered films at water-air interfaces through intermolecular interactions but contribute nothing to the rodlet structure (Probable). HFB2-6 is a class II hydrophobin that has a function in root colonization (PubMed:25644947). Acts as an effector in poplar by up-regulating the expression of genes related to both the jasmonic acid and salicylic acid signal transduction pathways, which not only causes induced systemic resistance (ISR), but also systemic acquired resistance (SAR), giving poplar broad-spectrum resistance to pathogens (PubMed:25644947). Also induces genes related to auxin signal transduction to promote poplar growth (PubMed:25644947). Plays roles in interactions with both biotic and abiotic environmental conditions such as the presence of the pathogen Alternaria alternata or nutrient starvation conditions (PubMed:25644947).</text>
</comment>
<comment type="subunit">
    <text evidence="1">Homodimer (By similarity). Homodimers further self-assemble to form highly ordered films at water-air interfaces through intermolecular interactions (By similarity).</text>
</comment>
<comment type="subcellular location">
    <subcellularLocation>
        <location evidence="1">Secreted</location>
    </subcellularLocation>
    <subcellularLocation>
        <location evidence="1">Secreted</location>
        <location evidence="1">Cell wall</location>
    </subcellularLocation>
</comment>
<comment type="induction">
    <text evidence="3">Expression is up-regulated under Alternaria alternata cell wall and Alternaria alternata fermentation liquid treatments (PubMed:25644947). Expression is also up-regulated under nutritional stress conditions (PubMed:25644947). Expression is down-regulated in the presence of poplar leaf powder but up-regulated in the presence of poplar root powder (PubMed:25644947).</text>
</comment>
<comment type="similarity">
    <text evidence="5">Belongs to the cerato-ulmin hydrophobin family.</text>
</comment>
<proteinExistence type="evidence at transcript level"/>
<organism>
    <name type="scientific">Trichoderma asperellum</name>
    <name type="common">Filamentous fungus</name>
    <dbReference type="NCBI Taxonomy" id="101201"/>
    <lineage>
        <taxon>Eukaryota</taxon>
        <taxon>Fungi</taxon>
        <taxon>Dikarya</taxon>
        <taxon>Ascomycota</taxon>
        <taxon>Pezizomycotina</taxon>
        <taxon>Sordariomycetes</taxon>
        <taxon>Hypocreomycetidae</taxon>
        <taxon>Hypocreales</taxon>
        <taxon>Hypocreaceae</taxon>
        <taxon>Trichoderma</taxon>
    </lineage>
</organism>
<accession>I7AQG9</accession>
<protein>
    <recommendedName>
        <fullName evidence="4">Class II hydrophobin 6</fullName>
    </recommendedName>
</protein>
<reference key="1">
    <citation type="journal article" date="2015" name="Microbiol. Res.">
        <title>Functional analysis of the class II hydrophobin gene HFB2-6 from the biocontrol agent Trichoderma asperellum ACCC30536.</title>
        <authorList>
            <person name="Huang Y."/>
            <person name="Mijiti G."/>
            <person name="Wang Z."/>
            <person name="Yu W."/>
            <person name="Fan H."/>
            <person name="Zhang R."/>
            <person name="Liu Z."/>
        </authorList>
    </citation>
    <scope>NUCLEOTIDE SEQUENCE [MRNA]</scope>
    <scope>INDUCTION</scope>
    <scope>FUNCTION</scope>
    <source>
        <strain>T4</strain>
    </source>
</reference>
<keyword id="KW-0134">Cell wall</keyword>
<keyword id="KW-1015">Disulfide bond</keyword>
<keyword id="KW-0964">Secreted</keyword>
<keyword id="KW-0732">Signal</keyword>
<evidence type="ECO:0000250" key="1">
    <source>
        <dbReference type="UniProtKB" id="P79073"/>
    </source>
</evidence>
<evidence type="ECO:0000255" key="2"/>
<evidence type="ECO:0000269" key="3">
    <source>
    </source>
</evidence>
<evidence type="ECO:0000303" key="4">
    <source>
    </source>
</evidence>
<evidence type="ECO:0000305" key="5"/>
<feature type="signal peptide" evidence="2">
    <location>
        <begin position="1"/>
        <end position="16"/>
    </location>
</feature>
<feature type="chain" id="PRO_5007674290" description="Class II hydrophobin 6">
    <location>
        <begin position="17"/>
        <end position="106"/>
    </location>
</feature>
<feature type="disulfide bond" evidence="1">
    <location>
        <begin position="36"/>
        <end position="86"/>
    </location>
</feature>
<feature type="disulfide bond" evidence="1">
    <location>
        <begin position="47"/>
        <end position="77"/>
    </location>
</feature>
<feature type="disulfide bond" evidence="1">
    <location>
        <begin position="48"/>
        <end position="60"/>
    </location>
</feature>
<feature type="disulfide bond" evidence="1">
    <location>
        <begin position="87"/>
        <end position="98"/>
    </location>
</feature>
<gene>
    <name evidence="4" type="primary">HFB2-6</name>
</gene>
<sequence length="106" mass="10876">MQFFTVATLFLATAFAAPSVDTNGNGIAPRLAANFCPPGLLYSNPQCCQIDVLGVADLDCVSPPSGPSKCKTFAGICDKIGRQPKCCVVPVAGQALLCTDPVGANN</sequence>
<dbReference type="EMBL" id="JX014433">
    <property type="protein sequence ID" value="AFN88524.1"/>
    <property type="molecule type" value="mRNA"/>
</dbReference>
<dbReference type="EMBL" id="JX185070">
    <property type="protein sequence ID" value="AFQ32094.1"/>
    <property type="molecule type" value="Genomic_DNA"/>
</dbReference>
<dbReference type="GO" id="GO:0005576">
    <property type="term" value="C:extracellular region"/>
    <property type="evidence" value="ECO:0007669"/>
    <property type="project" value="UniProtKB-KW"/>
</dbReference>
<dbReference type="CDD" id="cd23508">
    <property type="entry name" value="hydrophobin_II"/>
    <property type="match status" value="1"/>
</dbReference>
<dbReference type="Gene3D" id="3.20.120.10">
    <property type="entry name" value="Hydrophobin"/>
    <property type="match status" value="1"/>
</dbReference>
<dbReference type="InterPro" id="IPR010636">
    <property type="entry name" value="Cerato-ulmin_hydrophobin"/>
</dbReference>
<dbReference type="InterPro" id="IPR036686">
    <property type="entry name" value="Hydrophobin_sf"/>
</dbReference>
<dbReference type="PANTHER" id="PTHR42341">
    <property type="entry name" value="HYDROPHOBIN"/>
    <property type="match status" value="1"/>
</dbReference>
<dbReference type="PANTHER" id="PTHR42341:SF1">
    <property type="entry name" value="HYDROPHOBIN"/>
    <property type="match status" value="1"/>
</dbReference>
<dbReference type="Pfam" id="PF06766">
    <property type="entry name" value="Hydrophobin_2"/>
    <property type="match status" value="1"/>
</dbReference>
<dbReference type="SUPFAM" id="SSF101751">
    <property type="entry name" value="Hydrophobin II, HfbII"/>
    <property type="match status" value="1"/>
</dbReference>